<sequence length="547" mass="60044">MVKKHQNSKMGNTNHFGHLKSFVGGNVVALGAGTPYLFSFYAPQLLSKCHIPVSASSKLSFSLTIGSSLMGILAGIVVDRSPKLSCLIGSMCVFIAYLILNLCYKHEWSSTFLISLSLVLIGYGSVSGFYASVKCANTNFPQHRGTAGAFPVSLYGLSGMVFSYLCSKLFGENIEHVFIFLMVACGCMILVGYFSLDIFSNAEGDDASIKEWELQKSRETDDNIVPLYENSNDYIGSPVRSSSPATYETYALSDNFQETSEFFALEDRQLSNRPLLSPSSPHTKYDFEDENTSKNTVGENSAQKSMRLHVFQSLKSSTFIGYYIVLGILQGVGLMYIYSVGFMVQAQVSTPPLNQLPINAEKIQSLQVTLLSLLSFCGRLSSGPISDFLVKKFKAQRLWNIVIASLLVFLASNKISHDFSSIEDPSLRASKSFKNISVCSAIFGYSFGVLFGTFPSIVADRFGTNGYSTLWGVLTTGGVFSVSVFTDILGRDFKANTGDDDGNCKKGVLCYSYTFMVTKYCAAFNLLFVLGIIGYTYYRRRATANSL</sequence>
<feature type="chain" id="PRO_0000203311" description="Uncharacterized membrane protein YMR155W">
    <location>
        <begin position="1"/>
        <end position="547"/>
    </location>
</feature>
<feature type="topological domain" description="Extracellular" evidence="1">
    <location>
        <begin position="1"/>
        <end position="21"/>
    </location>
</feature>
<feature type="transmembrane region" description="Helical" evidence="1">
    <location>
        <begin position="22"/>
        <end position="42"/>
    </location>
</feature>
<feature type="topological domain" description="Cytoplasmic" evidence="1">
    <location>
        <begin position="43"/>
        <end position="58"/>
    </location>
</feature>
<feature type="transmembrane region" description="Helical" evidence="1">
    <location>
        <begin position="59"/>
        <end position="79"/>
    </location>
</feature>
<feature type="topological domain" description="Extracellular" evidence="1">
    <location>
        <begin position="80"/>
        <end position="83"/>
    </location>
</feature>
<feature type="transmembrane region" description="Helical" evidence="1">
    <location>
        <begin position="84"/>
        <end position="104"/>
    </location>
</feature>
<feature type="topological domain" description="Cytoplasmic" evidence="1">
    <location>
        <begin position="105"/>
        <end position="110"/>
    </location>
</feature>
<feature type="transmembrane region" description="Helical" evidence="1">
    <location>
        <begin position="111"/>
        <end position="131"/>
    </location>
</feature>
<feature type="topological domain" description="Extracellular" evidence="1">
    <location>
        <begin position="132"/>
        <end position="144"/>
    </location>
</feature>
<feature type="transmembrane region" description="Helical" evidence="1">
    <location>
        <begin position="145"/>
        <end position="165"/>
    </location>
</feature>
<feature type="topological domain" description="Cytoplasmic" evidence="1">
    <location>
        <begin position="166"/>
        <end position="175"/>
    </location>
</feature>
<feature type="transmembrane region" description="Helical" evidence="1">
    <location>
        <begin position="176"/>
        <end position="196"/>
    </location>
</feature>
<feature type="topological domain" description="Extracellular" evidence="1">
    <location>
        <begin position="197"/>
        <end position="323"/>
    </location>
</feature>
<feature type="transmembrane region" description="Helical" evidence="1">
    <location>
        <begin position="324"/>
        <end position="344"/>
    </location>
</feature>
<feature type="topological domain" description="Cytoplasmic" evidence="1">
    <location>
        <begin position="345"/>
        <end position="398"/>
    </location>
</feature>
<feature type="transmembrane region" description="Helical" evidence="1">
    <location>
        <begin position="399"/>
        <end position="419"/>
    </location>
</feature>
<feature type="topological domain" description="Extracellular" evidence="1">
    <location>
        <begin position="420"/>
        <end position="437"/>
    </location>
</feature>
<feature type="transmembrane region" description="Helical" evidence="1">
    <location>
        <begin position="438"/>
        <end position="458"/>
    </location>
</feature>
<feature type="topological domain" description="Cytoplasmic" evidence="1">
    <location>
        <begin position="459"/>
        <end position="469"/>
    </location>
</feature>
<feature type="transmembrane region" description="Helical" evidence="1">
    <location>
        <begin position="470"/>
        <end position="490"/>
    </location>
</feature>
<feature type="topological domain" description="Extracellular" evidence="1">
    <location>
        <begin position="491"/>
        <end position="514"/>
    </location>
</feature>
<feature type="transmembrane region" description="Helical" evidence="1">
    <location>
        <begin position="515"/>
        <end position="535"/>
    </location>
</feature>
<feature type="topological domain" description="Cytoplasmic" evidence="1">
    <location>
        <begin position="536"/>
        <end position="547"/>
    </location>
</feature>
<feature type="region of interest" description="Disordered" evidence="2">
    <location>
        <begin position="275"/>
        <end position="300"/>
    </location>
</feature>
<feature type="modified residue" description="Phosphoserine" evidence="3">
    <location>
        <position position="237"/>
    </location>
</feature>
<keyword id="KW-0472">Membrane</keyword>
<keyword id="KW-0597">Phosphoprotein</keyword>
<keyword id="KW-1185">Reference proteome</keyword>
<keyword id="KW-0812">Transmembrane</keyword>
<keyword id="KW-1133">Transmembrane helix</keyword>
<proteinExistence type="evidence at protein level"/>
<accession>Q03795</accession>
<accession>D6VZX6</accession>
<gene>
    <name type="ordered locus">YMR155W</name>
    <name type="ORF">YM8520.04</name>
</gene>
<dbReference type="EMBL" id="Z49705">
    <property type="protein sequence ID" value="CAA89791.1"/>
    <property type="molecule type" value="Genomic_DNA"/>
</dbReference>
<dbReference type="EMBL" id="BK006946">
    <property type="protein sequence ID" value="DAA10050.1"/>
    <property type="molecule type" value="Genomic_DNA"/>
</dbReference>
<dbReference type="PIR" id="S54513">
    <property type="entry name" value="S54513"/>
</dbReference>
<dbReference type="RefSeq" id="NP_013876.1">
    <property type="nucleotide sequence ID" value="NM_001182658.1"/>
</dbReference>
<dbReference type="BioGRID" id="35330">
    <property type="interactions" value="230"/>
</dbReference>
<dbReference type="DIP" id="DIP-4428N"/>
<dbReference type="FunCoup" id="Q03795">
    <property type="interactions" value="124"/>
</dbReference>
<dbReference type="IntAct" id="Q03795">
    <property type="interactions" value="5"/>
</dbReference>
<dbReference type="MINT" id="Q03795"/>
<dbReference type="STRING" id="4932.YMR155W"/>
<dbReference type="iPTMnet" id="Q03795"/>
<dbReference type="PaxDb" id="4932-YMR155W"/>
<dbReference type="PeptideAtlas" id="Q03795"/>
<dbReference type="EnsemblFungi" id="YMR155W_mRNA">
    <property type="protein sequence ID" value="YMR155W"/>
    <property type="gene ID" value="YMR155W"/>
</dbReference>
<dbReference type="GeneID" id="855187"/>
<dbReference type="KEGG" id="sce:YMR155W"/>
<dbReference type="AGR" id="SGD:S000004764"/>
<dbReference type="SGD" id="S000004764">
    <property type="gene designation" value="YMR155W"/>
</dbReference>
<dbReference type="VEuPathDB" id="FungiDB:YMR155W"/>
<dbReference type="eggNOG" id="ENOG502QQN9">
    <property type="taxonomic scope" value="Eukaryota"/>
</dbReference>
<dbReference type="HOGENOM" id="CLU_012596_0_1_1"/>
<dbReference type="InParanoid" id="Q03795"/>
<dbReference type="OMA" id="TNHWLIL"/>
<dbReference type="OrthoDB" id="410267at2759"/>
<dbReference type="BioCyc" id="YEAST:G3O-32845-MONOMER"/>
<dbReference type="BioGRID-ORCS" id="855187">
    <property type="hits" value="0 hits in 10 CRISPR screens"/>
</dbReference>
<dbReference type="PRO" id="PR:Q03795"/>
<dbReference type="Proteomes" id="UP000002311">
    <property type="component" value="Chromosome XIII"/>
</dbReference>
<dbReference type="RNAct" id="Q03795">
    <property type="molecule type" value="protein"/>
</dbReference>
<dbReference type="GO" id="GO:0000324">
    <property type="term" value="C:fungal-type vacuole"/>
    <property type="evidence" value="ECO:0007005"/>
    <property type="project" value="SGD"/>
</dbReference>
<dbReference type="GO" id="GO:0000329">
    <property type="term" value="C:fungal-type vacuole membrane"/>
    <property type="evidence" value="ECO:0000318"/>
    <property type="project" value="GO_Central"/>
</dbReference>
<dbReference type="GO" id="GO:0022857">
    <property type="term" value="F:transmembrane transporter activity"/>
    <property type="evidence" value="ECO:0007669"/>
    <property type="project" value="InterPro"/>
</dbReference>
<dbReference type="Gene3D" id="1.20.1250.20">
    <property type="entry name" value="MFS general substrate transporter like domains"/>
    <property type="match status" value="2"/>
</dbReference>
<dbReference type="InterPro" id="IPR011701">
    <property type="entry name" value="MFS"/>
</dbReference>
<dbReference type="InterPro" id="IPR036259">
    <property type="entry name" value="MFS_trans_sf"/>
</dbReference>
<dbReference type="PANTHER" id="PTHR21576:SF166">
    <property type="entry name" value="ADR278WP"/>
    <property type="match status" value="1"/>
</dbReference>
<dbReference type="PANTHER" id="PTHR21576">
    <property type="entry name" value="UNCHARACTERIZED NODULIN-LIKE PROTEIN"/>
    <property type="match status" value="1"/>
</dbReference>
<dbReference type="Pfam" id="PF07690">
    <property type="entry name" value="MFS_1"/>
    <property type="match status" value="1"/>
</dbReference>
<dbReference type="SUPFAM" id="SSF103473">
    <property type="entry name" value="MFS general substrate transporter"/>
    <property type="match status" value="2"/>
</dbReference>
<protein>
    <recommendedName>
        <fullName>Uncharacterized membrane protein YMR155W</fullName>
    </recommendedName>
</protein>
<organism>
    <name type="scientific">Saccharomyces cerevisiae (strain ATCC 204508 / S288c)</name>
    <name type="common">Baker's yeast</name>
    <dbReference type="NCBI Taxonomy" id="559292"/>
    <lineage>
        <taxon>Eukaryota</taxon>
        <taxon>Fungi</taxon>
        <taxon>Dikarya</taxon>
        <taxon>Ascomycota</taxon>
        <taxon>Saccharomycotina</taxon>
        <taxon>Saccharomycetes</taxon>
        <taxon>Saccharomycetales</taxon>
        <taxon>Saccharomycetaceae</taxon>
        <taxon>Saccharomyces</taxon>
    </lineage>
</organism>
<reference key="1">
    <citation type="journal article" date="1997" name="Nature">
        <title>The nucleotide sequence of Saccharomyces cerevisiae chromosome XIII.</title>
        <authorList>
            <person name="Bowman S."/>
            <person name="Churcher C.M."/>
            <person name="Badcock K."/>
            <person name="Brown D."/>
            <person name="Chillingworth T."/>
            <person name="Connor R."/>
            <person name="Dedman K."/>
            <person name="Devlin K."/>
            <person name="Gentles S."/>
            <person name="Hamlin N."/>
            <person name="Hunt S."/>
            <person name="Jagels K."/>
            <person name="Lye G."/>
            <person name="Moule S."/>
            <person name="Odell C."/>
            <person name="Pearson D."/>
            <person name="Rajandream M.A."/>
            <person name="Rice P."/>
            <person name="Skelton J."/>
            <person name="Walsh S.V."/>
            <person name="Whitehead S."/>
            <person name="Barrell B.G."/>
        </authorList>
    </citation>
    <scope>NUCLEOTIDE SEQUENCE [LARGE SCALE GENOMIC DNA]</scope>
    <source>
        <strain>ATCC 204508 / S288c</strain>
    </source>
</reference>
<reference key="2">
    <citation type="journal article" date="2014" name="G3 (Bethesda)">
        <title>The reference genome sequence of Saccharomyces cerevisiae: Then and now.</title>
        <authorList>
            <person name="Engel S.R."/>
            <person name="Dietrich F.S."/>
            <person name="Fisk D.G."/>
            <person name="Binkley G."/>
            <person name="Balakrishnan R."/>
            <person name="Costanzo M.C."/>
            <person name="Dwight S.S."/>
            <person name="Hitz B.C."/>
            <person name="Karra K."/>
            <person name="Nash R.S."/>
            <person name="Weng S."/>
            <person name="Wong E.D."/>
            <person name="Lloyd P."/>
            <person name="Skrzypek M.S."/>
            <person name="Miyasato S.R."/>
            <person name="Simison M."/>
            <person name="Cherry J.M."/>
        </authorList>
    </citation>
    <scope>GENOME REANNOTATION</scope>
    <source>
        <strain>ATCC 204508 / S288c</strain>
    </source>
</reference>
<reference key="3">
    <citation type="journal article" date="2006" name="Proc. Natl. Acad. Sci. U.S.A.">
        <title>A global topology map of the Saccharomyces cerevisiae membrane proteome.</title>
        <authorList>
            <person name="Kim H."/>
            <person name="Melen K."/>
            <person name="Oesterberg M."/>
            <person name="von Heijne G."/>
        </authorList>
    </citation>
    <scope>TOPOLOGY [LARGE SCALE ANALYSIS]</scope>
    <source>
        <strain>ATCC 208353 / W303-1A</strain>
    </source>
</reference>
<reference key="4">
    <citation type="journal article" date="2008" name="Mol. Cell. Proteomics">
        <title>A multidimensional chromatography technology for in-depth phosphoproteome analysis.</title>
        <authorList>
            <person name="Albuquerque C.P."/>
            <person name="Smolka M.B."/>
            <person name="Payne S.H."/>
            <person name="Bafna V."/>
            <person name="Eng J."/>
            <person name="Zhou H."/>
        </authorList>
    </citation>
    <scope>PHOSPHORYLATION [LARGE SCALE ANALYSIS] AT SER-237</scope>
    <scope>IDENTIFICATION BY MASS SPECTROMETRY [LARGE SCALE ANALYSIS]</scope>
</reference>
<reference key="5">
    <citation type="journal article" date="2009" name="Science">
        <title>Global analysis of Cdk1 substrate phosphorylation sites provides insights into evolution.</title>
        <authorList>
            <person name="Holt L.J."/>
            <person name="Tuch B.B."/>
            <person name="Villen J."/>
            <person name="Johnson A.D."/>
            <person name="Gygi S.P."/>
            <person name="Morgan D.O."/>
        </authorList>
    </citation>
    <scope>IDENTIFICATION BY MASS SPECTROMETRY [LARGE SCALE ANALYSIS]</scope>
</reference>
<comment type="subcellular location">
    <subcellularLocation>
        <location>Membrane</location>
        <topology>Multi-pass membrane protein</topology>
    </subcellularLocation>
</comment>
<name>YM30_YEAST</name>
<evidence type="ECO:0000255" key="1"/>
<evidence type="ECO:0000256" key="2">
    <source>
        <dbReference type="SAM" id="MobiDB-lite"/>
    </source>
</evidence>
<evidence type="ECO:0007744" key="3">
    <source>
    </source>
</evidence>